<name>RL30_RHORT</name>
<proteinExistence type="inferred from homology"/>
<comment type="subunit">
    <text evidence="1">Part of the 50S ribosomal subunit.</text>
</comment>
<comment type="similarity">
    <text evidence="1">Belongs to the universal ribosomal protein uL30 family.</text>
</comment>
<accession>Q2RQX8</accession>
<feature type="chain" id="PRO_0000273843" description="Large ribosomal subunit protein uL30">
    <location>
        <begin position="1"/>
        <end position="63"/>
    </location>
</feature>
<reference key="1">
    <citation type="journal article" date="2011" name="Stand. Genomic Sci.">
        <title>Complete genome sequence of Rhodospirillum rubrum type strain (S1).</title>
        <authorList>
            <person name="Munk A.C."/>
            <person name="Copeland A."/>
            <person name="Lucas S."/>
            <person name="Lapidus A."/>
            <person name="Del Rio T.G."/>
            <person name="Barry K."/>
            <person name="Detter J.C."/>
            <person name="Hammon N."/>
            <person name="Israni S."/>
            <person name="Pitluck S."/>
            <person name="Brettin T."/>
            <person name="Bruce D."/>
            <person name="Han C."/>
            <person name="Tapia R."/>
            <person name="Gilna P."/>
            <person name="Schmutz J."/>
            <person name="Larimer F."/>
            <person name="Land M."/>
            <person name="Kyrpides N.C."/>
            <person name="Mavromatis K."/>
            <person name="Richardson P."/>
            <person name="Rohde M."/>
            <person name="Goeker M."/>
            <person name="Klenk H.P."/>
            <person name="Zhang Y."/>
            <person name="Roberts G.P."/>
            <person name="Reslewic S."/>
            <person name="Schwartz D.C."/>
        </authorList>
    </citation>
    <scope>NUCLEOTIDE SEQUENCE [LARGE SCALE GENOMIC DNA]</scope>
    <source>
        <strain>ATCC 11170 / ATH 1.1.1 / DSM 467 / LMG 4362 / NCIMB 8255 / S1</strain>
    </source>
</reference>
<organism>
    <name type="scientific">Rhodospirillum rubrum (strain ATCC 11170 / ATH 1.1.1 / DSM 467 / LMG 4362 / NCIMB 8255 / S1)</name>
    <dbReference type="NCBI Taxonomy" id="269796"/>
    <lineage>
        <taxon>Bacteria</taxon>
        <taxon>Pseudomonadati</taxon>
        <taxon>Pseudomonadota</taxon>
        <taxon>Alphaproteobacteria</taxon>
        <taxon>Rhodospirillales</taxon>
        <taxon>Rhodospirillaceae</taxon>
        <taxon>Rhodospirillum</taxon>
    </lineage>
</organism>
<keyword id="KW-1185">Reference proteome</keyword>
<keyword id="KW-0687">Ribonucleoprotein</keyword>
<keyword id="KW-0689">Ribosomal protein</keyword>
<gene>
    <name evidence="1" type="primary">rpmD</name>
    <name type="ordered locus">Rru_A2670</name>
</gene>
<protein>
    <recommendedName>
        <fullName evidence="1">Large ribosomal subunit protein uL30</fullName>
    </recommendedName>
    <alternativeName>
        <fullName evidence="2">50S ribosomal protein L30</fullName>
    </alternativeName>
</protein>
<sequence>MAETSKTVVVTQIGSPIGRRSDQRATLIGLGLNKMNRTRELEDTPAVRGMIDKIAHLVRVEDV</sequence>
<dbReference type="EMBL" id="CP000230">
    <property type="protein sequence ID" value="ABC23467.1"/>
    <property type="molecule type" value="Genomic_DNA"/>
</dbReference>
<dbReference type="RefSeq" id="WP_011390420.1">
    <property type="nucleotide sequence ID" value="NC_007643.1"/>
</dbReference>
<dbReference type="RefSeq" id="YP_427754.1">
    <property type="nucleotide sequence ID" value="NC_007643.1"/>
</dbReference>
<dbReference type="SMR" id="Q2RQX8"/>
<dbReference type="STRING" id="269796.Rru_A2670"/>
<dbReference type="EnsemblBacteria" id="ABC23467">
    <property type="protein sequence ID" value="ABC23467"/>
    <property type="gene ID" value="Rru_A2670"/>
</dbReference>
<dbReference type="KEGG" id="rru:Rru_A2670"/>
<dbReference type="PATRIC" id="fig|269796.9.peg.2777"/>
<dbReference type="eggNOG" id="COG1841">
    <property type="taxonomic scope" value="Bacteria"/>
</dbReference>
<dbReference type="HOGENOM" id="CLU_131047_1_2_5"/>
<dbReference type="PhylomeDB" id="Q2RQX8"/>
<dbReference type="Proteomes" id="UP000001929">
    <property type="component" value="Chromosome"/>
</dbReference>
<dbReference type="GO" id="GO:0022625">
    <property type="term" value="C:cytosolic large ribosomal subunit"/>
    <property type="evidence" value="ECO:0007669"/>
    <property type="project" value="TreeGrafter"/>
</dbReference>
<dbReference type="GO" id="GO:0003735">
    <property type="term" value="F:structural constituent of ribosome"/>
    <property type="evidence" value="ECO:0007669"/>
    <property type="project" value="InterPro"/>
</dbReference>
<dbReference type="GO" id="GO:0006412">
    <property type="term" value="P:translation"/>
    <property type="evidence" value="ECO:0007669"/>
    <property type="project" value="UniProtKB-UniRule"/>
</dbReference>
<dbReference type="CDD" id="cd01658">
    <property type="entry name" value="Ribosomal_L30"/>
    <property type="match status" value="1"/>
</dbReference>
<dbReference type="Gene3D" id="3.30.1390.20">
    <property type="entry name" value="Ribosomal protein L30, ferredoxin-like fold domain"/>
    <property type="match status" value="1"/>
</dbReference>
<dbReference type="HAMAP" id="MF_01371_B">
    <property type="entry name" value="Ribosomal_uL30_B"/>
    <property type="match status" value="1"/>
</dbReference>
<dbReference type="InterPro" id="IPR036919">
    <property type="entry name" value="Ribo_uL30_ferredoxin-like_sf"/>
</dbReference>
<dbReference type="InterPro" id="IPR005996">
    <property type="entry name" value="Ribosomal_uL30_bac-type"/>
</dbReference>
<dbReference type="InterPro" id="IPR016082">
    <property type="entry name" value="Ribosomal_uL30_ferredoxin-like"/>
</dbReference>
<dbReference type="NCBIfam" id="TIGR01308">
    <property type="entry name" value="rpmD_bact"/>
    <property type="match status" value="1"/>
</dbReference>
<dbReference type="PANTHER" id="PTHR15892:SF2">
    <property type="entry name" value="LARGE RIBOSOMAL SUBUNIT PROTEIN UL30M"/>
    <property type="match status" value="1"/>
</dbReference>
<dbReference type="PANTHER" id="PTHR15892">
    <property type="entry name" value="MITOCHONDRIAL RIBOSOMAL PROTEIN L30"/>
    <property type="match status" value="1"/>
</dbReference>
<dbReference type="Pfam" id="PF00327">
    <property type="entry name" value="Ribosomal_L30"/>
    <property type="match status" value="1"/>
</dbReference>
<dbReference type="PIRSF" id="PIRSF002211">
    <property type="entry name" value="Ribosomal_L30_bac-type"/>
    <property type="match status" value="1"/>
</dbReference>
<dbReference type="SUPFAM" id="SSF55129">
    <property type="entry name" value="Ribosomal protein L30p/L7e"/>
    <property type="match status" value="1"/>
</dbReference>
<evidence type="ECO:0000255" key="1">
    <source>
        <dbReference type="HAMAP-Rule" id="MF_01371"/>
    </source>
</evidence>
<evidence type="ECO:0000305" key="2"/>